<reference key="1">
    <citation type="submission" date="2008-05" db="EMBL/GenBank/DDBJ databases">
        <title>Complete sequence of Shigella boydii serotype 18 strain BS512.</title>
        <authorList>
            <person name="Rasko D.A."/>
            <person name="Rosovitz M."/>
            <person name="Maurelli A.T."/>
            <person name="Myers G."/>
            <person name="Seshadri R."/>
            <person name="Cer R."/>
            <person name="Jiang L."/>
            <person name="Ravel J."/>
            <person name="Sebastian Y."/>
        </authorList>
    </citation>
    <scope>NUCLEOTIDE SEQUENCE [LARGE SCALE GENOMIC DNA]</scope>
    <source>
        <strain>CDC 3083-94 / BS512</strain>
    </source>
</reference>
<comment type="function">
    <text evidence="1">Catalyzes the decarboxylation of orotidine 5'-monophosphate (OMP) to uridine 5'-monophosphate (UMP).</text>
</comment>
<comment type="catalytic activity">
    <reaction evidence="1">
        <text>orotidine 5'-phosphate + H(+) = UMP + CO2</text>
        <dbReference type="Rhea" id="RHEA:11596"/>
        <dbReference type="ChEBI" id="CHEBI:15378"/>
        <dbReference type="ChEBI" id="CHEBI:16526"/>
        <dbReference type="ChEBI" id="CHEBI:57538"/>
        <dbReference type="ChEBI" id="CHEBI:57865"/>
        <dbReference type="EC" id="4.1.1.23"/>
    </reaction>
</comment>
<comment type="pathway">
    <text evidence="1">Pyrimidine metabolism; UMP biosynthesis via de novo pathway; UMP from orotate: step 2/2.</text>
</comment>
<comment type="subunit">
    <text evidence="1">Homodimer.</text>
</comment>
<comment type="similarity">
    <text evidence="1">Belongs to the OMP decarboxylase family. Type 1 subfamily.</text>
</comment>
<dbReference type="EC" id="4.1.1.23" evidence="1"/>
<dbReference type="EMBL" id="CP001063">
    <property type="protein sequence ID" value="ACD08607.1"/>
    <property type="molecule type" value="Genomic_DNA"/>
</dbReference>
<dbReference type="RefSeq" id="WP_000176274.1">
    <property type="nucleotide sequence ID" value="NC_010658.1"/>
</dbReference>
<dbReference type="SMR" id="B2U0H4"/>
<dbReference type="STRING" id="344609.SbBS512_E1510"/>
<dbReference type="KEGG" id="sbc:SbBS512_E1510"/>
<dbReference type="HOGENOM" id="CLU_067069_0_0_6"/>
<dbReference type="UniPathway" id="UPA00070">
    <property type="reaction ID" value="UER00120"/>
</dbReference>
<dbReference type="Proteomes" id="UP000001030">
    <property type="component" value="Chromosome"/>
</dbReference>
<dbReference type="GO" id="GO:0005829">
    <property type="term" value="C:cytosol"/>
    <property type="evidence" value="ECO:0007669"/>
    <property type="project" value="TreeGrafter"/>
</dbReference>
<dbReference type="GO" id="GO:0004590">
    <property type="term" value="F:orotidine-5'-phosphate decarboxylase activity"/>
    <property type="evidence" value="ECO:0007669"/>
    <property type="project" value="UniProtKB-UniRule"/>
</dbReference>
<dbReference type="GO" id="GO:0006207">
    <property type="term" value="P:'de novo' pyrimidine nucleobase biosynthetic process"/>
    <property type="evidence" value="ECO:0007669"/>
    <property type="project" value="InterPro"/>
</dbReference>
<dbReference type="GO" id="GO:0044205">
    <property type="term" value="P:'de novo' UMP biosynthetic process"/>
    <property type="evidence" value="ECO:0007669"/>
    <property type="project" value="UniProtKB-UniRule"/>
</dbReference>
<dbReference type="CDD" id="cd04725">
    <property type="entry name" value="OMP_decarboxylase_like"/>
    <property type="match status" value="1"/>
</dbReference>
<dbReference type="FunFam" id="3.20.20.70:FF:000015">
    <property type="entry name" value="Orotidine 5'-phosphate decarboxylase"/>
    <property type="match status" value="1"/>
</dbReference>
<dbReference type="Gene3D" id="3.20.20.70">
    <property type="entry name" value="Aldolase class I"/>
    <property type="match status" value="1"/>
</dbReference>
<dbReference type="HAMAP" id="MF_01200_B">
    <property type="entry name" value="OMPdecase_type1_B"/>
    <property type="match status" value="1"/>
</dbReference>
<dbReference type="InterPro" id="IPR013785">
    <property type="entry name" value="Aldolase_TIM"/>
</dbReference>
<dbReference type="InterPro" id="IPR014732">
    <property type="entry name" value="OMPdecase"/>
</dbReference>
<dbReference type="InterPro" id="IPR018089">
    <property type="entry name" value="OMPdecase_AS"/>
</dbReference>
<dbReference type="InterPro" id="IPR047596">
    <property type="entry name" value="OMPdecase_bac"/>
</dbReference>
<dbReference type="InterPro" id="IPR001754">
    <property type="entry name" value="OMPdeCOase_dom"/>
</dbReference>
<dbReference type="InterPro" id="IPR011060">
    <property type="entry name" value="RibuloseP-bd_barrel"/>
</dbReference>
<dbReference type="NCBIfam" id="NF001273">
    <property type="entry name" value="PRK00230.1"/>
    <property type="match status" value="1"/>
</dbReference>
<dbReference type="NCBIfam" id="TIGR01740">
    <property type="entry name" value="pyrF"/>
    <property type="match status" value="1"/>
</dbReference>
<dbReference type="PANTHER" id="PTHR32119">
    <property type="entry name" value="OROTIDINE 5'-PHOSPHATE DECARBOXYLASE"/>
    <property type="match status" value="1"/>
</dbReference>
<dbReference type="PANTHER" id="PTHR32119:SF2">
    <property type="entry name" value="OROTIDINE 5'-PHOSPHATE DECARBOXYLASE"/>
    <property type="match status" value="1"/>
</dbReference>
<dbReference type="Pfam" id="PF00215">
    <property type="entry name" value="OMPdecase"/>
    <property type="match status" value="1"/>
</dbReference>
<dbReference type="SMART" id="SM00934">
    <property type="entry name" value="OMPdecase"/>
    <property type="match status" value="1"/>
</dbReference>
<dbReference type="SUPFAM" id="SSF51366">
    <property type="entry name" value="Ribulose-phoshate binding barrel"/>
    <property type="match status" value="1"/>
</dbReference>
<dbReference type="PROSITE" id="PS00156">
    <property type="entry name" value="OMPDECASE"/>
    <property type="match status" value="1"/>
</dbReference>
<protein>
    <recommendedName>
        <fullName evidence="1">Orotidine 5'-phosphate decarboxylase</fullName>
        <ecNumber evidence="1">4.1.1.23</ecNumber>
    </recommendedName>
    <alternativeName>
        <fullName evidence="1">OMP decarboxylase</fullName>
        <shortName evidence="1">OMPDCase</shortName>
        <shortName evidence="1">OMPdecase</shortName>
    </alternativeName>
</protein>
<gene>
    <name evidence="1" type="primary">pyrF</name>
    <name type="ordered locus">SbBS512_E1510</name>
</gene>
<proteinExistence type="inferred from homology"/>
<organism>
    <name type="scientific">Shigella boydii serotype 18 (strain CDC 3083-94 / BS512)</name>
    <dbReference type="NCBI Taxonomy" id="344609"/>
    <lineage>
        <taxon>Bacteria</taxon>
        <taxon>Pseudomonadati</taxon>
        <taxon>Pseudomonadota</taxon>
        <taxon>Gammaproteobacteria</taxon>
        <taxon>Enterobacterales</taxon>
        <taxon>Enterobacteriaceae</taxon>
        <taxon>Shigella</taxon>
    </lineage>
</organism>
<sequence length="245" mass="26248">MTLTASSSSRAVTNSPVVVALDYHNRDDALSFVDKIDPRDCRLKVGKEMFTLFGPQFVRELQQRGFDIFLDLKFHDIPNTAAHAVAAAADLGVWMVNVHASGGARMMTAAREALVPFGKDAPLLIAVTVLTSMEASDLADLGVTLSPADYAERLAALTQKCGLDGVVCSAQEAVRFKQVFGQEFKLVTPGIRPQGSDAGDQRRIMTPEQALAAGVDYMAIGRPVTQSVDPAQTLKAINASLQRSA</sequence>
<keyword id="KW-0210">Decarboxylase</keyword>
<keyword id="KW-0456">Lyase</keyword>
<keyword id="KW-0665">Pyrimidine biosynthesis</keyword>
<keyword id="KW-1185">Reference proteome</keyword>
<feature type="chain" id="PRO_1000138558" description="Orotidine 5'-phosphate decarboxylase">
    <location>
        <begin position="1"/>
        <end position="245"/>
    </location>
</feature>
<feature type="active site" description="Proton donor" evidence="1">
    <location>
        <position position="73"/>
    </location>
</feature>
<feature type="binding site" evidence="1">
    <location>
        <position position="22"/>
    </location>
    <ligand>
        <name>substrate</name>
    </ligand>
</feature>
<feature type="binding site" evidence="1">
    <location>
        <position position="44"/>
    </location>
    <ligand>
        <name>substrate</name>
    </ligand>
</feature>
<feature type="binding site" evidence="1">
    <location>
        <begin position="71"/>
        <end position="80"/>
    </location>
    <ligand>
        <name>substrate</name>
    </ligand>
</feature>
<feature type="binding site" evidence="1">
    <location>
        <position position="131"/>
    </location>
    <ligand>
        <name>substrate</name>
    </ligand>
</feature>
<feature type="binding site" evidence="1">
    <location>
        <position position="192"/>
    </location>
    <ligand>
        <name>substrate</name>
    </ligand>
</feature>
<feature type="binding site" evidence="1">
    <location>
        <position position="201"/>
    </location>
    <ligand>
        <name>substrate</name>
    </ligand>
</feature>
<feature type="binding site" evidence="1">
    <location>
        <position position="221"/>
    </location>
    <ligand>
        <name>substrate</name>
    </ligand>
</feature>
<feature type="binding site" evidence="1">
    <location>
        <position position="222"/>
    </location>
    <ligand>
        <name>substrate</name>
    </ligand>
</feature>
<evidence type="ECO:0000255" key="1">
    <source>
        <dbReference type="HAMAP-Rule" id="MF_01200"/>
    </source>
</evidence>
<name>PYRF_SHIB3</name>
<accession>B2U0H4</accession>